<evidence type="ECO:0000255" key="1">
    <source>
        <dbReference type="HAMAP-Rule" id="MF_00211"/>
    </source>
</evidence>
<protein>
    <recommendedName>
        <fullName evidence="1">Anthranilate phosphoribosyltransferase</fullName>
        <ecNumber evidence="1">2.4.2.18</ecNumber>
    </recommendedName>
</protein>
<organism>
    <name type="scientific">Clavibacter michiganensis subsp. michiganensis (strain NCPPB 382)</name>
    <dbReference type="NCBI Taxonomy" id="443906"/>
    <lineage>
        <taxon>Bacteria</taxon>
        <taxon>Bacillati</taxon>
        <taxon>Actinomycetota</taxon>
        <taxon>Actinomycetes</taxon>
        <taxon>Micrococcales</taxon>
        <taxon>Microbacteriaceae</taxon>
        <taxon>Clavibacter</taxon>
    </lineage>
</organism>
<accession>A5CS25</accession>
<sequence length="351" mass="36683">MPSAPTWPALITTLIEGRHLSVSESTWAMRQVMRGEATPAQLGGLLVALRASGETVDEIVGFRDAVLEEALPLDADPRALDIVGTGGDPYGAVLNISSVASVIAAAAGVPVIKHGNRGASSASGASDVLTALGVDLSITPERVAEVLRETGITYAHAALFHPGFRHAAATRRELGISTLFNVLGPLCNPARPEASAVGVADLSRVPLMVGVFRTRGATALVYRGDDGIDKLTTTGHSHIWEVSRGAVTEHDLDPLELGIPRAPIEALLGEGVEQNAEVIRRVLAGEPGPQRDVVLLNAAAGLEAFDLMGDPTRVQQPMARRLREKVAIAADAVDSGRAAAKLEEWAAATRA</sequence>
<dbReference type="EC" id="2.4.2.18" evidence="1"/>
<dbReference type="EMBL" id="AM711867">
    <property type="protein sequence ID" value="CAN01888.1"/>
    <property type="molecule type" value="Genomic_DNA"/>
</dbReference>
<dbReference type="RefSeq" id="WP_012038520.1">
    <property type="nucleotide sequence ID" value="NC_009480.1"/>
</dbReference>
<dbReference type="SMR" id="A5CS25"/>
<dbReference type="GeneID" id="92947824"/>
<dbReference type="KEGG" id="cmi:CMM_1833"/>
<dbReference type="eggNOG" id="COG0547">
    <property type="taxonomic scope" value="Bacteria"/>
</dbReference>
<dbReference type="HOGENOM" id="CLU_034315_4_1_11"/>
<dbReference type="OrthoDB" id="9806430at2"/>
<dbReference type="UniPathway" id="UPA00035">
    <property type="reaction ID" value="UER00041"/>
</dbReference>
<dbReference type="Proteomes" id="UP000001564">
    <property type="component" value="Chromosome"/>
</dbReference>
<dbReference type="GO" id="GO:0005829">
    <property type="term" value="C:cytosol"/>
    <property type="evidence" value="ECO:0007669"/>
    <property type="project" value="TreeGrafter"/>
</dbReference>
<dbReference type="GO" id="GO:0004048">
    <property type="term" value="F:anthranilate phosphoribosyltransferase activity"/>
    <property type="evidence" value="ECO:0007669"/>
    <property type="project" value="UniProtKB-UniRule"/>
</dbReference>
<dbReference type="GO" id="GO:0000287">
    <property type="term" value="F:magnesium ion binding"/>
    <property type="evidence" value="ECO:0007669"/>
    <property type="project" value="UniProtKB-UniRule"/>
</dbReference>
<dbReference type="GO" id="GO:0000162">
    <property type="term" value="P:L-tryptophan biosynthetic process"/>
    <property type="evidence" value="ECO:0007669"/>
    <property type="project" value="UniProtKB-UniRule"/>
</dbReference>
<dbReference type="Gene3D" id="3.40.1030.10">
    <property type="entry name" value="Nucleoside phosphorylase/phosphoribosyltransferase catalytic domain"/>
    <property type="match status" value="1"/>
</dbReference>
<dbReference type="Gene3D" id="1.20.970.10">
    <property type="entry name" value="Transferase, Pyrimidine Nucleoside Phosphorylase, Chain C"/>
    <property type="match status" value="1"/>
</dbReference>
<dbReference type="HAMAP" id="MF_00211">
    <property type="entry name" value="TrpD"/>
    <property type="match status" value="1"/>
</dbReference>
<dbReference type="InterPro" id="IPR005940">
    <property type="entry name" value="Anthranilate_Pribosyl_Tfrase"/>
</dbReference>
<dbReference type="InterPro" id="IPR000312">
    <property type="entry name" value="Glycosyl_Trfase_fam3"/>
</dbReference>
<dbReference type="InterPro" id="IPR017459">
    <property type="entry name" value="Glycosyl_Trfase_fam3_N_dom"/>
</dbReference>
<dbReference type="InterPro" id="IPR036320">
    <property type="entry name" value="Glycosyl_Trfase_fam3_N_dom_sf"/>
</dbReference>
<dbReference type="InterPro" id="IPR035902">
    <property type="entry name" value="Nuc_phospho_transferase"/>
</dbReference>
<dbReference type="NCBIfam" id="TIGR01245">
    <property type="entry name" value="trpD"/>
    <property type="match status" value="1"/>
</dbReference>
<dbReference type="PANTHER" id="PTHR43285">
    <property type="entry name" value="ANTHRANILATE PHOSPHORIBOSYLTRANSFERASE"/>
    <property type="match status" value="1"/>
</dbReference>
<dbReference type="PANTHER" id="PTHR43285:SF2">
    <property type="entry name" value="ANTHRANILATE PHOSPHORIBOSYLTRANSFERASE"/>
    <property type="match status" value="1"/>
</dbReference>
<dbReference type="Pfam" id="PF02885">
    <property type="entry name" value="Glycos_trans_3N"/>
    <property type="match status" value="1"/>
</dbReference>
<dbReference type="Pfam" id="PF00591">
    <property type="entry name" value="Glycos_transf_3"/>
    <property type="match status" value="1"/>
</dbReference>
<dbReference type="SUPFAM" id="SSF52418">
    <property type="entry name" value="Nucleoside phosphorylase/phosphoribosyltransferase catalytic domain"/>
    <property type="match status" value="1"/>
</dbReference>
<dbReference type="SUPFAM" id="SSF47648">
    <property type="entry name" value="Nucleoside phosphorylase/phosphoribosyltransferase N-terminal domain"/>
    <property type="match status" value="1"/>
</dbReference>
<feature type="chain" id="PRO_1000043006" description="Anthranilate phosphoribosyltransferase">
    <location>
        <begin position="1"/>
        <end position="351"/>
    </location>
</feature>
<feature type="binding site" evidence="1">
    <location>
        <position position="84"/>
    </location>
    <ligand>
        <name>5-phospho-alpha-D-ribose 1-diphosphate</name>
        <dbReference type="ChEBI" id="CHEBI:58017"/>
    </ligand>
</feature>
<feature type="binding site" evidence="1">
    <location>
        <position position="84"/>
    </location>
    <ligand>
        <name>anthranilate</name>
        <dbReference type="ChEBI" id="CHEBI:16567"/>
        <label>1</label>
    </ligand>
</feature>
<feature type="binding site" evidence="1">
    <location>
        <begin position="87"/>
        <end position="88"/>
    </location>
    <ligand>
        <name>5-phospho-alpha-D-ribose 1-diphosphate</name>
        <dbReference type="ChEBI" id="CHEBI:58017"/>
    </ligand>
</feature>
<feature type="binding site" evidence="1">
    <location>
        <begin position="95"/>
        <end position="98"/>
    </location>
    <ligand>
        <name>5-phospho-alpha-D-ribose 1-diphosphate</name>
        <dbReference type="ChEBI" id="CHEBI:58017"/>
    </ligand>
</feature>
<feature type="binding site" evidence="1">
    <location>
        <position position="97"/>
    </location>
    <ligand>
        <name>Mg(2+)</name>
        <dbReference type="ChEBI" id="CHEBI:18420"/>
        <label>1</label>
    </ligand>
</feature>
<feature type="binding site" evidence="1">
    <location>
        <begin position="113"/>
        <end position="121"/>
    </location>
    <ligand>
        <name>5-phospho-alpha-D-ribose 1-diphosphate</name>
        <dbReference type="ChEBI" id="CHEBI:58017"/>
    </ligand>
</feature>
<feature type="binding site" evidence="1">
    <location>
        <position position="116"/>
    </location>
    <ligand>
        <name>anthranilate</name>
        <dbReference type="ChEBI" id="CHEBI:16567"/>
        <label>1</label>
    </ligand>
</feature>
<feature type="binding site" evidence="1">
    <location>
        <position position="125"/>
    </location>
    <ligand>
        <name>5-phospho-alpha-D-ribose 1-diphosphate</name>
        <dbReference type="ChEBI" id="CHEBI:58017"/>
    </ligand>
</feature>
<feature type="binding site" evidence="1">
    <location>
        <position position="171"/>
    </location>
    <ligand>
        <name>anthranilate</name>
        <dbReference type="ChEBI" id="CHEBI:16567"/>
        <label>2</label>
    </ligand>
</feature>
<feature type="binding site" evidence="1">
    <location>
        <position position="229"/>
    </location>
    <ligand>
        <name>Mg(2+)</name>
        <dbReference type="ChEBI" id="CHEBI:18420"/>
        <label>2</label>
    </ligand>
</feature>
<feature type="binding site" evidence="1">
    <location>
        <position position="230"/>
    </location>
    <ligand>
        <name>Mg(2+)</name>
        <dbReference type="ChEBI" id="CHEBI:18420"/>
        <label>1</label>
    </ligand>
</feature>
<feature type="binding site" evidence="1">
    <location>
        <position position="230"/>
    </location>
    <ligand>
        <name>Mg(2+)</name>
        <dbReference type="ChEBI" id="CHEBI:18420"/>
        <label>2</label>
    </ligand>
</feature>
<comment type="function">
    <text evidence="1">Catalyzes the transfer of the phosphoribosyl group of 5-phosphorylribose-1-pyrophosphate (PRPP) to anthranilate to yield N-(5'-phosphoribosyl)-anthranilate (PRA).</text>
</comment>
<comment type="catalytic activity">
    <reaction evidence="1">
        <text>N-(5-phospho-beta-D-ribosyl)anthranilate + diphosphate = 5-phospho-alpha-D-ribose 1-diphosphate + anthranilate</text>
        <dbReference type="Rhea" id="RHEA:11768"/>
        <dbReference type="ChEBI" id="CHEBI:16567"/>
        <dbReference type="ChEBI" id="CHEBI:18277"/>
        <dbReference type="ChEBI" id="CHEBI:33019"/>
        <dbReference type="ChEBI" id="CHEBI:58017"/>
        <dbReference type="EC" id="2.4.2.18"/>
    </reaction>
</comment>
<comment type="cofactor">
    <cofactor evidence="1">
        <name>Mg(2+)</name>
        <dbReference type="ChEBI" id="CHEBI:18420"/>
    </cofactor>
    <text evidence="1">Binds 2 magnesium ions per monomer.</text>
</comment>
<comment type="pathway">
    <text evidence="1">Amino-acid biosynthesis; L-tryptophan biosynthesis; L-tryptophan from chorismate: step 2/5.</text>
</comment>
<comment type="subunit">
    <text evidence="1">Homodimer.</text>
</comment>
<comment type="similarity">
    <text evidence="1">Belongs to the anthranilate phosphoribosyltransferase family.</text>
</comment>
<proteinExistence type="inferred from homology"/>
<reference key="1">
    <citation type="journal article" date="2008" name="J. Bacteriol.">
        <title>The genome sequence of the tomato-pathogenic actinomycete Clavibacter michiganensis subsp. michiganensis NCPPB382 reveals a large island involved in pathogenicity.</title>
        <authorList>
            <person name="Gartemann K.-H."/>
            <person name="Abt B."/>
            <person name="Bekel T."/>
            <person name="Burger A."/>
            <person name="Engemann J."/>
            <person name="Fluegel M."/>
            <person name="Gaigalat L."/>
            <person name="Goesmann A."/>
            <person name="Graefen I."/>
            <person name="Kalinowski J."/>
            <person name="Kaup O."/>
            <person name="Kirchner O."/>
            <person name="Krause L."/>
            <person name="Linke B."/>
            <person name="McHardy A."/>
            <person name="Meyer F."/>
            <person name="Pohle S."/>
            <person name="Rueckert C."/>
            <person name="Schneiker S."/>
            <person name="Zellermann E.-M."/>
            <person name="Puehler A."/>
            <person name="Eichenlaub R."/>
            <person name="Kaiser O."/>
            <person name="Bartels D."/>
        </authorList>
    </citation>
    <scope>NUCLEOTIDE SEQUENCE [LARGE SCALE GENOMIC DNA]</scope>
    <source>
        <strain>NCPPB 382</strain>
    </source>
</reference>
<keyword id="KW-0028">Amino-acid biosynthesis</keyword>
<keyword id="KW-0057">Aromatic amino acid biosynthesis</keyword>
<keyword id="KW-0328">Glycosyltransferase</keyword>
<keyword id="KW-0460">Magnesium</keyword>
<keyword id="KW-0479">Metal-binding</keyword>
<keyword id="KW-0808">Transferase</keyword>
<keyword id="KW-0822">Tryptophan biosynthesis</keyword>
<gene>
    <name evidence="1" type="primary">trpD</name>
    <name type="ordered locus">CMM_1833</name>
</gene>
<name>TRPD_CLAM3</name>